<proteinExistence type="inferred from homology"/>
<keyword id="KW-0010">Activator</keyword>
<keyword id="KW-0963">Cytoplasm</keyword>
<keyword id="KW-0238">DNA-binding</keyword>
<keyword id="KW-0276">Fatty acid metabolism</keyword>
<keyword id="KW-0443">Lipid metabolism</keyword>
<keyword id="KW-1185">Reference proteome</keyword>
<keyword id="KW-0678">Repressor</keyword>
<keyword id="KW-0804">Transcription</keyword>
<keyword id="KW-0805">Transcription regulation</keyword>
<sequence length="239" mass="26969">MVIKAQSPAGFAEEYIIESIWNNRFPPGTILPAERELSELIGVTRTTLREVLQRLARDGWLTIQHGKPTKVNNFWETSGLNILETLARLDHESVPQLIDNLLSVRTNISTIFIRTAFRQHPDKAQEVLATANEVADHADAFAELDYNIFRGLAFASGNPIYGLILNGMKGLYTRIGRHYFANPEARSLALGFYHKLSALCSEGAHDQVYETVRRYGHESGEIWHRMQKNLPGDLAIQGR</sequence>
<feature type="chain" id="PRO_0000301516" description="Fatty acid metabolism regulator protein">
    <location>
        <begin position="1"/>
        <end position="239"/>
    </location>
</feature>
<feature type="domain" description="HTH gntR-type" evidence="1">
    <location>
        <begin position="6"/>
        <end position="74"/>
    </location>
</feature>
<feature type="DNA-binding region" description="H-T-H motif" evidence="1">
    <location>
        <begin position="34"/>
        <end position="53"/>
    </location>
</feature>
<evidence type="ECO:0000255" key="1">
    <source>
        <dbReference type="HAMAP-Rule" id="MF_00696"/>
    </source>
</evidence>
<organism>
    <name type="scientific">Shigella sonnei (strain Ss046)</name>
    <dbReference type="NCBI Taxonomy" id="300269"/>
    <lineage>
        <taxon>Bacteria</taxon>
        <taxon>Pseudomonadati</taxon>
        <taxon>Pseudomonadota</taxon>
        <taxon>Gammaproteobacteria</taxon>
        <taxon>Enterobacterales</taxon>
        <taxon>Enterobacteriaceae</taxon>
        <taxon>Shigella</taxon>
    </lineage>
</organism>
<reference key="1">
    <citation type="journal article" date="2005" name="Nucleic Acids Res.">
        <title>Genome dynamics and diversity of Shigella species, the etiologic agents of bacillary dysentery.</title>
        <authorList>
            <person name="Yang F."/>
            <person name="Yang J."/>
            <person name="Zhang X."/>
            <person name="Chen L."/>
            <person name="Jiang Y."/>
            <person name="Yan Y."/>
            <person name="Tang X."/>
            <person name="Wang J."/>
            <person name="Xiong Z."/>
            <person name="Dong J."/>
            <person name="Xue Y."/>
            <person name="Zhu Y."/>
            <person name="Xu X."/>
            <person name="Sun L."/>
            <person name="Chen S."/>
            <person name="Nie H."/>
            <person name="Peng J."/>
            <person name="Xu J."/>
            <person name="Wang Y."/>
            <person name="Yuan Z."/>
            <person name="Wen Y."/>
            <person name="Yao Z."/>
            <person name="Shen Y."/>
            <person name="Qiang B."/>
            <person name="Hou Y."/>
            <person name="Yu J."/>
            <person name="Jin Q."/>
        </authorList>
    </citation>
    <scope>NUCLEOTIDE SEQUENCE [LARGE SCALE GENOMIC DNA]</scope>
    <source>
        <strain>Ss046</strain>
    </source>
</reference>
<name>FADR_SHISS</name>
<gene>
    <name evidence="1" type="primary">fadR</name>
    <name type="ordered locus">SSON_1179</name>
</gene>
<protein>
    <recommendedName>
        <fullName evidence="1">Fatty acid metabolism regulator protein</fullName>
    </recommendedName>
</protein>
<comment type="function">
    <text evidence="1">Multifunctional regulator of fatty acid metabolism.</text>
</comment>
<comment type="subunit">
    <text evidence="1">Homodimer.</text>
</comment>
<comment type="subcellular location">
    <subcellularLocation>
        <location evidence="1">Cytoplasm</location>
    </subcellularLocation>
</comment>
<accession>Q3Z2W1</accession>
<dbReference type="EMBL" id="CP000038">
    <property type="protein sequence ID" value="AAZ87901.1"/>
    <property type="molecule type" value="Genomic_DNA"/>
</dbReference>
<dbReference type="RefSeq" id="WP_000234823.1">
    <property type="nucleotide sequence ID" value="NC_007384.1"/>
</dbReference>
<dbReference type="SMR" id="Q3Z2W1"/>
<dbReference type="GeneID" id="93776245"/>
<dbReference type="KEGG" id="ssn:SSON_1179"/>
<dbReference type="HOGENOM" id="CLU_017584_9_4_6"/>
<dbReference type="Proteomes" id="UP000002529">
    <property type="component" value="Chromosome"/>
</dbReference>
<dbReference type="GO" id="GO:0005737">
    <property type="term" value="C:cytoplasm"/>
    <property type="evidence" value="ECO:0007669"/>
    <property type="project" value="UniProtKB-SubCell"/>
</dbReference>
<dbReference type="GO" id="GO:0003677">
    <property type="term" value="F:DNA binding"/>
    <property type="evidence" value="ECO:0007669"/>
    <property type="project" value="UniProtKB-KW"/>
</dbReference>
<dbReference type="GO" id="GO:0003700">
    <property type="term" value="F:DNA-binding transcription factor activity"/>
    <property type="evidence" value="ECO:0007669"/>
    <property type="project" value="UniProtKB-UniRule"/>
</dbReference>
<dbReference type="GO" id="GO:0000062">
    <property type="term" value="F:fatty-acyl-CoA binding"/>
    <property type="evidence" value="ECO:0007669"/>
    <property type="project" value="InterPro"/>
</dbReference>
<dbReference type="GO" id="GO:0006631">
    <property type="term" value="P:fatty acid metabolic process"/>
    <property type="evidence" value="ECO:0007669"/>
    <property type="project" value="UniProtKB-KW"/>
</dbReference>
<dbReference type="GO" id="GO:0019217">
    <property type="term" value="P:regulation of fatty acid metabolic process"/>
    <property type="evidence" value="ECO:0007669"/>
    <property type="project" value="UniProtKB-UniRule"/>
</dbReference>
<dbReference type="CDD" id="cd07377">
    <property type="entry name" value="WHTH_GntR"/>
    <property type="match status" value="1"/>
</dbReference>
<dbReference type="FunFam" id="1.10.10.10:FF:000036">
    <property type="entry name" value="Fatty acid metabolism regulator protein"/>
    <property type="match status" value="1"/>
</dbReference>
<dbReference type="FunFam" id="1.20.120.530:FF:000003">
    <property type="entry name" value="Fatty acid metabolism regulator protein"/>
    <property type="match status" value="1"/>
</dbReference>
<dbReference type="Gene3D" id="1.20.120.530">
    <property type="entry name" value="GntR ligand-binding domain-like"/>
    <property type="match status" value="1"/>
</dbReference>
<dbReference type="Gene3D" id="1.10.10.10">
    <property type="entry name" value="Winged helix-like DNA-binding domain superfamily/Winged helix DNA-binding domain"/>
    <property type="match status" value="1"/>
</dbReference>
<dbReference type="HAMAP" id="MF_00696">
    <property type="entry name" value="HTH_FadR"/>
    <property type="match status" value="1"/>
</dbReference>
<dbReference type="InterPro" id="IPR014178">
    <property type="entry name" value="FA-response_TF_FadR"/>
</dbReference>
<dbReference type="InterPro" id="IPR028374">
    <property type="entry name" value="FadR_C"/>
</dbReference>
<dbReference type="InterPro" id="IPR008920">
    <property type="entry name" value="TF_FadR/GntR_C"/>
</dbReference>
<dbReference type="InterPro" id="IPR000524">
    <property type="entry name" value="Tscrpt_reg_HTH_GntR"/>
</dbReference>
<dbReference type="InterPro" id="IPR036388">
    <property type="entry name" value="WH-like_DNA-bd_sf"/>
</dbReference>
<dbReference type="InterPro" id="IPR036390">
    <property type="entry name" value="WH_DNA-bd_sf"/>
</dbReference>
<dbReference type="NCBIfam" id="TIGR02812">
    <property type="entry name" value="fadR_gamma"/>
    <property type="match status" value="1"/>
</dbReference>
<dbReference type="NCBIfam" id="NF003444">
    <property type="entry name" value="PRK04984.1"/>
    <property type="match status" value="1"/>
</dbReference>
<dbReference type="PANTHER" id="PTHR43537:SF52">
    <property type="entry name" value="FATTY ACID METABOLISM REGULATOR PROTEIN"/>
    <property type="match status" value="1"/>
</dbReference>
<dbReference type="PANTHER" id="PTHR43537">
    <property type="entry name" value="TRANSCRIPTIONAL REGULATOR, GNTR FAMILY"/>
    <property type="match status" value="1"/>
</dbReference>
<dbReference type="Pfam" id="PF07840">
    <property type="entry name" value="FadR_C"/>
    <property type="match status" value="1"/>
</dbReference>
<dbReference type="Pfam" id="PF00392">
    <property type="entry name" value="GntR"/>
    <property type="match status" value="1"/>
</dbReference>
<dbReference type="PRINTS" id="PR00035">
    <property type="entry name" value="HTHGNTR"/>
</dbReference>
<dbReference type="SMART" id="SM00345">
    <property type="entry name" value="HTH_GNTR"/>
    <property type="match status" value="1"/>
</dbReference>
<dbReference type="SUPFAM" id="SSF48008">
    <property type="entry name" value="GntR ligand-binding domain-like"/>
    <property type="match status" value="1"/>
</dbReference>
<dbReference type="SUPFAM" id="SSF46785">
    <property type="entry name" value="Winged helix' DNA-binding domain"/>
    <property type="match status" value="1"/>
</dbReference>
<dbReference type="PROSITE" id="PS50949">
    <property type="entry name" value="HTH_GNTR"/>
    <property type="match status" value="1"/>
</dbReference>